<sequence>MRDFKTYLSVAPVLSTLSLGFLTGFLIEMNRFFPDALTFPFFSF</sequence>
<dbReference type="EMBL" id="AM711639">
    <property type="protein sequence ID" value="CAM98345.1"/>
    <property type="molecule type" value="Genomic_DNA"/>
</dbReference>
<dbReference type="RefSeq" id="YP_001430059.1">
    <property type="nucleotide sequence ID" value="NC_009765.1"/>
</dbReference>
<dbReference type="SMR" id="A7M917"/>
<dbReference type="GeneID" id="5536713"/>
<dbReference type="GO" id="GO:0009522">
    <property type="term" value="C:photosystem I"/>
    <property type="evidence" value="ECO:0007669"/>
    <property type="project" value="UniProtKB-KW"/>
</dbReference>
<dbReference type="GO" id="GO:0042170">
    <property type="term" value="C:plastid membrane"/>
    <property type="evidence" value="ECO:0007669"/>
    <property type="project" value="UniProtKB-SubCell"/>
</dbReference>
<dbReference type="GO" id="GO:0042651">
    <property type="term" value="C:thylakoid membrane"/>
    <property type="evidence" value="ECO:0007669"/>
    <property type="project" value="UniProtKB-UniRule"/>
</dbReference>
<dbReference type="GO" id="GO:0015979">
    <property type="term" value="P:photosynthesis"/>
    <property type="evidence" value="ECO:0007669"/>
    <property type="project" value="UniProtKB-UniRule"/>
</dbReference>
<dbReference type="Gene3D" id="1.20.5.510">
    <property type="entry name" value="Single helix bin"/>
    <property type="match status" value="1"/>
</dbReference>
<dbReference type="HAMAP" id="MF_00522">
    <property type="entry name" value="PSI_PsaJ"/>
    <property type="match status" value="1"/>
</dbReference>
<dbReference type="InterPro" id="IPR002615">
    <property type="entry name" value="PSI_PsaJ"/>
</dbReference>
<dbReference type="InterPro" id="IPR036062">
    <property type="entry name" value="PSI_PsaJ_sf"/>
</dbReference>
<dbReference type="PANTHER" id="PTHR36082">
    <property type="match status" value="1"/>
</dbReference>
<dbReference type="PANTHER" id="PTHR36082:SF2">
    <property type="entry name" value="PHOTOSYSTEM I REACTION CENTER SUBUNIT IX"/>
    <property type="match status" value="1"/>
</dbReference>
<dbReference type="Pfam" id="PF01701">
    <property type="entry name" value="PSI_PsaJ"/>
    <property type="match status" value="1"/>
</dbReference>
<dbReference type="SUPFAM" id="SSF81544">
    <property type="entry name" value="Subunit IX of photosystem I reaction centre, PsaJ"/>
    <property type="match status" value="1"/>
</dbReference>
<feature type="chain" id="PRO_0000354141" description="Photosystem I reaction center subunit IX">
    <location>
        <begin position="1"/>
        <end position="44"/>
    </location>
</feature>
<feature type="transmembrane region" description="Helical" evidence="1">
    <location>
        <begin position="7"/>
        <end position="27"/>
    </location>
</feature>
<proteinExistence type="inferred from homology"/>
<reference key="1">
    <citation type="journal article" date="2007" name="BMC Plant Biol.">
        <title>Complete DNA sequences of the plastid genomes of two parasitic flowering plant species, Cuscuta reflexa and Cuscuta gronovii.</title>
        <authorList>
            <person name="Funk H.T."/>
            <person name="Berg S."/>
            <person name="Krupinska K."/>
            <person name="Maier U.-G."/>
            <person name="Krause K."/>
        </authorList>
    </citation>
    <scope>NUCLEOTIDE SEQUENCE [LARGE SCALE GENOMIC DNA]</scope>
</reference>
<geneLocation type="plastid"/>
<organism>
    <name type="scientific">Cuscuta gronovii</name>
    <name type="common">Common dodder</name>
    <name type="synonym">Epithymum gronovii</name>
    <dbReference type="NCBI Taxonomy" id="35886"/>
    <lineage>
        <taxon>Eukaryota</taxon>
        <taxon>Viridiplantae</taxon>
        <taxon>Streptophyta</taxon>
        <taxon>Embryophyta</taxon>
        <taxon>Tracheophyta</taxon>
        <taxon>Spermatophyta</taxon>
        <taxon>Magnoliopsida</taxon>
        <taxon>eudicotyledons</taxon>
        <taxon>Gunneridae</taxon>
        <taxon>Pentapetalae</taxon>
        <taxon>asterids</taxon>
        <taxon>lamiids</taxon>
        <taxon>Solanales</taxon>
        <taxon>Convolvulaceae</taxon>
        <taxon>Cuscuteae</taxon>
        <taxon>Cuscuta</taxon>
        <taxon>Cuscuta subgen. Grammica</taxon>
        <taxon>Cuscuta sect. Oxycarpae</taxon>
    </lineage>
</organism>
<comment type="function">
    <text evidence="1">May help in the organization of the PsaE and PsaF subunits.</text>
</comment>
<comment type="subcellular location">
    <subcellularLocation>
        <location evidence="2">Plastid membrane</location>
        <topology evidence="1">Single-pass membrane protein</topology>
    </subcellularLocation>
</comment>
<comment type="similarity">
    <text evidence="1">Belongs to the PsaJ family.</text>
</comment>
<comment type="caution">
    <text evidence="2">Young tissue from this organism is photosynthetic and contains some thylakoids, although the photosynthetic activity does not exceed the light compensation point.</text>
</comment>
<protein>
    <recommendedName>
        <fullName evidence="1">Photosystem I reaction center subunit IX</fullName>
    </recommendedName>
    <alternativeName>
        <fullName evidence="1">PSI-J</fullName>
    </alternativeName>
</protein>
<accession>A7M917</accession>
<evidence type="ECO:0000255" key="1">
    <source>
        <dbReference type="HAMAP-Rule" id="MF_00522"/>
    </source>
</evidence>
<evidence type="ECO:0000305" key="2"/>
<gene>
    <name evidence="1" type="primary">psaJ</name>
</gene>
<keyword id="KW-0472">Membrane</keyword>
<keyword id="KW-0602">Photosynthesis</keyword>
<keyword id="KW-0603">Photosystem I</keyword>
<keyword id="KW-0934">Plastid</keyword>
<keyword id="KW-0812">Transmembrane</keyword>
<keyword id="KW-1133">Transmembrane helix</keyword>
<name>PSAJ_CUSGR</name>